<reference key="1">
    <citation type="journal article" date="2001" name="Proc. Natl. Acad. Sci. U.S.A.">
        <title>Complete genomic sequence of Pasteurella multocida Pm70.</title>
        <authorList>
            <person name="May B.J."/>
            <person name="Zhang Q."/>
            <person name="Li L.L."/>
            <person name="Paustian M.L."/>
            <person name="Whittam T.S."/>
            <person name="Kapur V."/>
        </authorList>
    </citation>
    <scope>NUCLEOTIDE SEQUENCE [LARGE SCALE GENOMIC DNA]</scope>
    <source>
        <strain>Pm70</strain>
    </source>
</reference>
<sequence>MAAELTTAGYIGHHLAFLKTGDSFWHVHLDTLLFSIISGAIFLFVFSKVAKKATPGVPSKMQCFVEIMVDWIDGIVKENFHGPRHAVGPLALTIFCWVFIMNAIDLIPVDFLPQLAHLFGIEYLRAVPTADISGTLGLSIGVFFLIIFYTIKSKGMSGFVKEYTLHPFNHPLLIPVNLALESVTLLAKPVSLAFRLFGNMYAGELIFILIAVMYMANNFALNSMGIFMHLAWAIFHILVITLQAFIFMMLTVVYLSMGYNKAEH</sequence>
<dbReference type="EMBL" id="AE004439">
    <property type="protein sequence ID" value="AAK03572.1"/>
    <property type="molecule type" value="Genomic_DNA"/>
</dbReference>
<dbReference type="RefSeq" id="WP_005724193.1">
    <property type="nucleotide sequence ID" value="NC_002663.1"/>
</dbReference>
<dbReference type="SMR" id="Q9CKW6"/>
<dbReference type="STRING" id="272843.PM1488"/>
<dbReference type="EnsemblBacteria" id="AAK03572">
    <property type="protein sequence ID" value="AAK03572"/>
    <property type="gene ID" value="PM1488"/>
</dbReference>
<dbReference type="GeneID" id="77206952"/>
<dbReference type="KEGG" id="pmu:PM1488"/>
<dbReference type="HOGENOM" id="CLU_041018_1_0_6"/>
<dbReference type="OrthoDB" id="9789241at2"/>
<dbReference type="Proteomes" id="UP000000809">
    <property type="component" value="Chromosome"/>
</dbReference>
<dbReference type="GO" id="GO:0005886">
    <property type="term" value="C:plasma membrane"/>
    <property type="evidence" value="ECO:0007669"/>
    <property type="project" value="UniProtKB-SubCell"/>
</dbReference>
<dbReference type="GO" id="GO:0045259">
    <property type="term" value="C:proton-transporting ATP synthase complex"/>
    <property type="evidence" value="ECO:0007669"/>
    <property type="project" value="UniProtKB-KW"/>
</dbReference>
<dbReference type="GO" id="GO:0046933">
    <property type="term" value="F:proton-transporting ATP synthase activity, rotational mechanism"/>
    <property type="evidence" value="ECO:0007669"/>
    <property type="project" value="UniProtKB-UniRule"/>
</dbReference>
<dbReference type="GO" id="GO:0042777">
    <property type="term" value="P:proton motive force-driven plasma membrane ATP synthesis"/>
    <property type="evidence" value="ECO:0007669"/>
    <property type="project" value="TreeGrafter"/>
</dbReference>
<dbReference type="CDD" id="cd00310">
    <property type="entry name" value="ATP-synt_Fo_a_6"/>
    <property type="match status" value="1"/>
</dbReference>
<dbReference type="FunFam" id="1.20.120.220:FF:000002">
    <property type="entry name" value="ATP synthase subunit a"/>
    <property type="match status" value="1"/>
</dbReference>
<dbReference type="Gene3D" id="1.20.120.220">
    <property type="entry name" value="ATP synthase, F0 complex, subunit A"/>
    <property type="match status" value="1"/>
</dbReference>
<dbReference type="HAMAP" id="MF_01393">
    <property type="entry name" value="ATP_synth_a_bact"/>
    <property type="match status" value="1"/>
</dbReference>
<dbReference type="InterPro" id="IPR045082">
    <property type="entry name" value="ATP_syn_F0_a_bact/chloroplast"/>
</dbReference>
<dbReference type="InterPro" id="IPR000568">
    <property type="entry name" value="ATP_synth_F0_asu"/>
</dbReference>
<dbReference type="InterPro" id="IPR023011">
    <property type="entry name" value="ATP_synth_F0_asu_AS"/>
</dbReference>
<dbReference type="InterPro" id="IPR035908">
    <property type="entry name" value="F0_ATP_A_sf"/>
</dbReference>
<dbReference type="NCBIfam" id="TIGR01131">
    <property type="entry name" value="ATP_synt_6_or_A"/>
    <property type="match status" value="1"/>
</dbReference>
<dbReference type="NCBIfam" id="NF004477">
    <property type="entry name" value="PRK05815.1-1"/>
    <property type="match status" value="1"/>
</dbReference>
<dbReference type="PANTHER" id="PTHR42823">
    <property type="entry name" value="ATP SYNTHASE SUBUNIT A, CHLOROPLASTIC"/>
    <property type="match status" value="1"/>
</dbReference>
<dbReference type="PANTHER" id="PTHR42823:SF3">
    <property type="entry name" value="ATP SYNTHASE SUBUNIT A, CHLOROPLASTIC"/>
    <property type="match status" value="1"/>
</dbReference>
<dbReference type="Pfam" id="PF00119">
    <property type="entry name" value="ATP-synt_A"/>
    <property type="match status" value="1"/>
</dbReference>
<dbReference type="PRINTS" id="PR00123">
    <property type="entry name" value="ATPASEA"/>
</dbReference>
<dbReference type="SUPFAM" id="SSF81336">
    <property type="entry name" value="F1F0 ATP synthase subunit A"/>
    <property type="match status" value="1"/>
</dbReference>
<dbReference type="PROSITE" id="PS00449">
    <property type="entry name" value="ATPASE_A"/>
    <property type="match status" value="1"/>
</dbReference>
<feature type="chain" id="PRO_0000362363" description="ATP synthase subunit a">
    <location>
        <begin position="1"/>
        <end position="264"/>
    </location>
</feature>
<feature type="transmembrane region" description="Helical" evidence="1">
    <location>
        <begin position="27"/>
        <end position="47"/>
    </location>
</feature>
<feature type="transmembrane region" description="Helical" evidence="1">
    <location>
        <begin position="87"/>
        <end position="107"/>
    </location>
</feature>
<feature type="transmembrane region" description="Helical" evidence="1">
    <location>
        <begin position="131"/>
        <end position="151"/>
    </location>
</feature>
<feature type="transmembrane region" description="Helical" evidence="1">
    <location>
        <begin position="172"/>
        <end position="192"/>
    </location>
</feature>
<feature type="transmembrane region" description="Helical" evidence="1">
    <location>
        <begin position="196"/>
        <end position="216"/>
    </location>
</feature>
<feature type="transmembrane region" description="Helical" evidence="1">
    <location>
        <begin position="230"/>
        <end position="250"/>
    </location>
</feature>
<accession>Q9CKW6</accession>
<comment type="function">
    <text evidence="1">Key component of the proton channel; it plays a direct role in the translocation of protons across the membrane.</text>
</comment>
<comment type="subunit">
    <text evidence="1">F-type ATPases have 2 components, CF(1) - the catalytic core - and CF(0) - the membrane proton channel. CF(1) has five subunits: alpha(3), beta(3), gamma(1), delta(1), epsilon(1). CF(0) has three main subunits: a(1), b(2) and c(9-12). The alpha and beta chains form an alternating ring which encloses part of the gamma chain. CF(1) is attached to CF(0) by a central stalk formed by the gamma and epsilon chains, while a peripheral stalk is formed by the delta and b chains.</text>
</comment>
<comment type="subcellular location">
    <subcellularLocation>
        <location evidence="1">Cell inner membrane</location>
        <topology evidence="1">Multi-pass membrane protein</topology>
    </subcellularLocation>
</comment>
<comment type="similarity">
    <text evidence="1">Belongs to the ATPase A chain family.</text>
</comment>
<gene>
    <name evidence="1" type="primary">atpB</name>
    <name type="ordered locus">PM1488</name>
</gene>
<keyword id="KW-0066">ATP synthesis</keyword>
<keyword id="KW-0997">Cell inner membrane</keyword>
<keyword id="KW-1003">Cell membrane</keyword>
<keyword id="KW-0138">CF(0)</keyword>
<keyword id="KW-0375">Hydrogen ion transport</keyword>
<keyword id="KW-0406">Ion transport</keyword>
<keyword id="KW-0472">Membrane</keyword>
<keyword id="KW-1185">Reference proteome</keyword>
<keyword id="KW-0812">Transmembrane</keyword>
<keyword id="KW-1133">Transmembrane helix</keyword>
<keyword id="KW-0813">Transport</keyword>
<evidence type="ECO:0000255" key="1">
    <source>
        <dbReference type="HAMAP-Rule" id="MF_01393"/>
    </source>
</evidence>
<protein>
    <recommendedName>
        <fullName evidence="1">ATP synthase subunit a</fullName>
    </recommendedName>
    <alternativeName>
        <fullName evidence="1">ATP synthase F0 sector subunit a</fullName>
    </alternativeName>
    <alternativeName>
        <fullName evidence="1">F-ATPase subunit 6</fullName>
    </alternativeName>
</protein>
<name>ATP6_PASMU</name>
<organism>
    <name type="scientific">Pasteurella multocida (strain Pm70)</name>
    <dbReference type="NCBI Taxonomy" id="272843"/>
    <lineage>
        <taxon>Bacteria</taxon>
        <taxon>Pseudomonadati</taxon>
        <taxon>Pseudomonadota</taxon>
        <taxon>Gammaproteobacteria</taxon>
        <taxon>Pasteurellales</taxon>
        <taxon>Pasteurellaceae</taxon>
        <taxon>Pasteurella</taxon>
    </lineage>
</organism>
<proteinExistence type="inferred from homology"/>